<proteinExistence type="evidence at protein level"/>
<reference key="1">
    <citation type="journal article" date="1998" name="Science">
        <title>Genome sequence of the nematode C. elegans: a platform for investigating biology.</title>
        <authorList>
            <consortium name="The C. elegans sequencing consortium"/>
        </authorList>
    </citation>
    <scope>NUCLEOTIDE SEQUENCE [LARGE SCALE GENOMIC DNA]</scope>
    <source>
        <strain>Bristol N2</strain>
    </source>
</reference>
<comment type="function">
    <text evidence="1">Metalloprotease component of the 26S proteasome that specifically cleaves 'Lys-63'-linked polyubiquitin chains. The 26S proteasome is involved in the ATP-dependent degradation of ubiquitinated proteins. The function of the 'Lys-63'-specific deubiquitination of the proteasome is unclear (By similarity).</text>
</comment>
<comment type="subunit">
    <text evidence="1">Component of the 19S regulatory cap of the 26S proteasome.</text>
</comment>
<comment type="interaction">
    <interactant intactId="EBI-324401">
        <id>O76577</id>
    </interactant>
    <interactant intactId="EBI-324407">
        <id>O61792</id>
        <label>rpn-8</label>
    </interactant>
    <organismsDiffer>false</organismsDiffer>
    <experiments>5</experiments>
</comment>
<comment type="similarity">
    <text evidence="3">Belongs to the peptidase M67A family. PSMD14 subfamily.</text>
</comment>
<name>PSDE_CAEEL</name>
<protein>
    <recommendedName>
        <fullName>26S proteasome non-ATPase regulatory subunit 14</fullName>
        <ecNumber>3.4.19.-</ecNumber>
    </recommendedName>
    <alternativeName>
        <fullName>26S proteasome regulatory subunit rpn11</fullName>
    </alternativeName>
</protein>
<sequence length="312" mass="34596">MERFLRLGGLGGNLGTFGANPQDSNQVDTSETVYISSLALLKMLKHGRAGVPMEVMGLMLGEFVDDYTVNVIDVFAMPQSGTGVSVEAVDPVFQAKMLDMLKQTGRPEMVVGWYHSHPGFGCWLSGVDINTQQSFEALSDRAVAVVVDPIQSVKGKVVIDAFRTINPQSMALNQEPRQTTSNLGHLQKPSIQALIHGLNRHYYSIPIAYRTHDLEQKMLLNLNKLSWMDAVSVENYSKCGEQNKEHLKAMLKLAKNYKKALEDEKNMTDQELAIKNVGKMDPKRHIADEVSKMLNDNIVQSLAGMMATTSLQ</sequence>
<feature type="chain" id="PRO_0000213954" description="26S proteasome non-ATPase regulatory subunit 14">
    <location>
        <begin position="1"/>
        <end position="312"/>
    </location>
</feature>
<feature type="domain" description="MPN" evidence="2">
    <location>
        <begin position="33"/>
        <end position="168"/>
    </location>
</feature>
<feature type="short sequence motif" description="JAMM motif" evidence="2">
    <location>
        <begin position="115"/>
        <end position="128"/>
    </location>
</feature>
<feature type="binding site" evidence="2">
    <location>
        <position position="115"/>
    </location>
    <ligand>
        <name>Zn(2+)</name>
        <dbReference type="ChEBI" id="CHEBI:29105"/>
        <note>catalytic</note>
    </ligand>
</feature>
<feature type="binding site" evidence="2">
    <location>
        <position position="117"/>
    </location>
    <ligand>
        <name>Zn(2+)</name>
        <dbReference type="ChEBI" id="CHEBI:29105"/>
        <note>catalytic</note>
    </ligand>
</feature>
<feature type="binding site" evidence="2">
    <location>
        <position position="128"/>
    </location>
    <ligand>
        <name>Zn(2+)</name>
        <dbReference type="ChEBI" id="CHEBI:29105"/>
        <note>catalytic</note>
    </ligand>
</feature>
<evidence type="ECO:0000250" key="1"/>
<evidence type="ECO:0000255" key="2">
    <source>
        <dbReference type="PROSITE-ProRule" id="PRU01182"/>
    </source>
</evidence>
<evidence type="ECO:0000305" key="3"/>
<dbReference type="EC" id="3.4.19.-"/>
<dbReference type="EMBL" id="FO081599">
    <property type="protein sequence ID" value="CCD72745.1"/>
    <property type="molecule type" value="Genomic_DNA"/>
</dbReference>
<dbReference type="PIR" id="T33344">
    <property type="entry name" value="T33344"/>
</dbReference>
<dbReference type="RefSeq" id="NP_494712.1">
    <property type="nucleotide sequence ID" value="NM_062311.9"/>
</dbReference>
<dbReference type="SMR" id="O76577"/>
<dbReference type="BioGRID" id="39100">
    <property type="interactions" value="57"/>
</dbReference>
<dbReference type="FunCoup" id="O76577">
    <property type="interactions" value="3009"/>
</dbReference>
<dbReference type="IntAct" id="O76577">
    <property type="interactions" value="8"/>
</dbReference>
<dbReference type="STRING" id="6239.K07D4.3.1"/>
<dbReference type="MEROPS" id="M67.A11"/>
<dbReference type="PaxDb" id="6239-K07D4.3"/>
<dbReference type="PeptideAtlas" id="O76577"/>
<dbReference type="EnsemblMetazoa" id="K07D4.3.1">
    <property type="protein sequence ID" value="K07D4.3.1"/>
    <property type="gene ID" value="WBGene00004467"/>
</dbReference>
<dbReference type="EnsemblMetazoa" id="K07D4.3.2">
    <property type="protein sequence ID" value="K07D4.3.2"/>
    <property type="gene ID" value="WBGene00004467"/>
</dbReference>
<dbReference type="GeneID" id="173744"/>
<dbReference type="KEGG" id="cel:CELE_K07D4.3"/>
<dbReference type="UCSC" id="K07D4.3.1">
    <property type="organism name" value="c. elegans"/>
</dbReference>
<dbReference type="AGR" id="WB:WBGene00004467"/>
<dbReference type="CTD" id="173744"/>
<dbReference type="WormBase" id="K07D4.3">
    <property type="protein sequence ID" value="CE19527"/>
    <property type="gene ID" value="WBGene00004467"/>
    <property type="gene designation" value="rpn-11"/>
</dbReference>
<dbReference type="eggNOG" id="KOG1555">
    <property type="taxonomic scope" value="Eukaryota"/>
</dbReference>
<dbReference type="GeneTree" id="ENSGT00730000111116"/>
<dbReference type="HOGENOM" id="CLU_052991_0_1_1"/>
<dbReference type="InParanoid" id="O76577"/>
<dbReference type="OMA" id="KTGRHEM"/>
<dbReference type="OrthoDB" id="605656at2759"/>
<dbReference type="PhylomeDB" id="O76577"/>
<dbReference type="Reactome" id="R-CEL-1234176">
    <property type="pathway name" value="Oxygen-dependent proline hydroxylation of Hypoxia-inducible Factor Alpha"/>
</dbReference>
<dbReference type="Reactome" id="R-CEL-1236978">
    <property type="pathway name" value="Cross-presentation of soluble exogenous antigens (endosomes)"/>
</dbReference>
<dbReference type="Reactome" id="R-CEL-187577">
    <property type="pathway name" value="SCF(Skp2)-mediated degradation of p27/p21"/>
</dbReference>
<dbReference type="Reactome" id="R-CEL-195253">
    <property type="pathway name" value="Degradation of beta-catenin by the destruction complex"/>
</dbReference>
<dbReference type="Reactome" id="R-CEL-349425">
    <property type="pathway name" value="Autodegradation of the E3 ubiquitin ligase COP1"/>
</dbReference>
<dbReference type="Reactome" id="R-CEL-350562">
    <property type="pathway name" value="Regulation of ornithine decarboxylase (ODC)"/>
</dbReference>
<dbReference type="Reactome" id="R-CEL-382556">
    <property type="pathway name" value="ABC-family proteins mediated transport"/>
</dbReference>
<dbReference type="Reactome" id="R-CEL-4608870">
    <property type="pathway name" value="Asymmetric localization of PCP proteins"/>
</dbReference>
<dbReference type="Reactome" id="R-CEL-4641258">
    <property type="pathway name" value="Degradation of DVL"/>
</dbReference>
<dbReference type="Reactome" id="R-CEL-5632684">
    <property type="pathway name" value="Hedgehog 'on' state"/>
</dbReference>
<dbReference type="Reactome" id="R-CEL-5687128">
    <property type="pathway name" value="MAPK6/MAPK4 signaling"/>
</dbReference>
<dbReference type="Reactome" id="R-CEL-5689603">
    <property type="pathway name" value="UCH proteinases"/>
</dbReference>
<dbReference type="Reactome" id="R-CEL-5689880">
    <property type="pathway name" value="Ub-specific processing proteases"/>
</dbReference>
<dbReference type="Reactome" id="R-CEL-5689901">
    <property type="pathway name" value="Metalloprotease DUBs"/>
</dbReference>
<dbReference type="Reactome" id="R-CEL-6798695">
    <property type="pathway name" value="Neutrophil degranulation"/>
</dbReference>
<dbReference type="Reactome" id="R-CEL-68949">
    <property type="pathway name" value="Orc1 removal from chromatin"/>
</dbReference>
<dbReference type="Reactome" id="R-CEL-69017">
    <property type="pathway name" value="CDK-mediated phosphorylation and removal of Cdc6"/>
</dbReference>
<dbReference type="Reactome" id="R-CEL-69601">
    <property type="pathway name" value="Ubiquitin Mediated Degradation of Phosphorylated Cdc25A"/>
</dbReference>
<dbReference type="Reactome" id="R-CEL-75815">
    <property type="pathway name" value="Ubiquitin-dependent degradation of Cyclin D"/>
</dbReference>
<dbReference type="Reactome" id="R-CEL-8854050">
    <property type="pathway name" value="FBXL7 down-regulates AURKA during mitotic entry and in early mitosis"/>
</dbReference>
<dbReference type="Reactome" id="R-CEL-8939902">
    <property type="pathway name" value="Regulation of RUNX2 expression and activity"/>
</dbReference>
<dbReference type="Reactome" id="R-CEL-8941858">
    <property type="pathway name" value="Regulation of RUNX3 expression and activity"/>
</dbReference>
<dbReference type="Reactome" id="R-CEL-8948751">
    <property type="pathway name" value="Regulation of PTEN stability and activity"/>
</dbReference>
<dbReference type="Reactome" id="R-CEL-8951664">
    <property type="pathway name" value="Neddylation"/>
</dbReference>
<dbReference type="Reactome" id="R-CEL-9755511">
    <property type="pathway name" value="KEAP1-NFE2L2 pathway"/>
</dbReference>
<dbReference type="Reactome" id="R-CEL-9762114">
    <property type="pathway name" value="GSK3B and BTRC:CUL1-mediated-degradation of NFE2L2"/>
</dbReference>
<dbReference type="Reactome" id="R-CEL-983168">
    <property type="pathway name" value="Antigen processing: Ubiquitination &amp; Proteasome degradation"/>
</dbReference>
<dbReference type="Reactome" id="R-CEL-9907900">
    <property type="pathway name" value="Proteasome assembly"/>
</dbReference>
<dbReference type="SignaLink" id="O76577"/>
<dbReference type="PRO" id="PR:O76577"/>
<dbReference type="Proteomes" id="UP000001940">
    <property type="component" value="Chromosome II"/>
</dbReference>
<dbReference type="Bgee" id="WBGene00004467">
    <property type="expression patterns" value="Expressed in adult organism and 4 other cell types or tissues"/>
</dbReference>
<dbReference type="GO" id="GO:0005634">
    <property type="term" value="C:nucleus"/>
    <property type="evidence" value="ECO:0000318"/>
    <property type="project" value="GO_Central"/>
</dbReference>
<dbReference type="GO" id="GO:0005838">
    <property type="term" value="C:proteasome regulatory particle"/>
    <property type="evidence" value="ECO:0000250"/>
    <property type="project" value="WormBase"/>
</dbReference>
<dbReference type="GO" id="GO:0008541">
    <property type="term" value="C:proteasome regulatory particle, lid subcomplex"/>
    <property type="evidence" value="ECO:0000318"/>
    <property type="project" value="GO_Central"/>
</dbReference>
<dbReference type="GO" id="GO:0046872">
    <property type="term" value="F:metal ion binding"/>
    <property type="evidence" value="ECO:0007669"/>
    <property type="project" value="UniProtKB-KW"/>
</dbReference>
<dbReference type="GO" id="GO:0140492">
    <property type="term" value="F:metal-dependent deubiquitinase activity"/>
    <property type="evidence" value="ECO:0000318"/>
    <property type="project" value="GO_Central"/>
</dbReference>
<dbReference type="GO" id="GO:0070628">
    <property type="term" value="F:proteasome binding"/>
    <property type="evidence" value="ECO:0000318"/>
    <property type="project" value="GO_Central"/>
</dbReference>
<dbReference type="GO" id="GO:0010623">
    <property type="term" value="P:programmed cell death involved in cell development"/>
    <property type="evidence" value="ECO:0000315"/>
    <property type="project" value="UniProtKB"/>
</dbReference>
<dbReference type="GO" id="GO:0043161">
    <property type="term" value="P:proteasome-mediated ubiquitin-dependent protein catabolic process"/>
    <property type="evidence" value="ECO:0000318"/>
    <property type="project" value="GO_Central"/>
</dbReference>
<dbReference type="CDD" id="cd08069">
    <property type="entry name" value="MPN_RPN11_CSN5"/>
    <property type="match status" value="1"/>
</dbReference>
<dbReference type="FunFam" id="3.40.140.10:FF:000001">
    <property type="entry name" value="26S proteasome non-ATPase regulatory subunit"/>
    <property type="match status" value="1"/>
</dbReference>
<dbReference type="Gene3D" id="3.40.140.10">
    <property type="entry name" value="Cytidine Deaminase, domain 2"/>
    <property type="match status" value="1"/>
</dbReference>
<dbReference type="InterPro" id="IPR000555">
    <property type="entry name" value="JAMM/MPN+_dom"/>
</dbReference>
<dbReference type="InterPro" id="IPR050242">
    <property type="entry name" value="JAMM_MPN+_peptidase_M67A"/>
</dbReference>
<dbReference type="InterPro" id="IPR037518">
    <property type="entry name" value="MPN"/>
</dbReference>
<dbReference type="InterPro" id="IPR056263">
    <property type="entry name" value="RPN11_C"/>
</dbReference>
<dbReference type="PANTHER" id="PTHR10410">
    <property type="entry name" value="EUKARYOTIC TRANSLATION INITIATION FACTOR 3 -RELATED"/>
    <property type="match status" value="1"/>
</dbReference>
<dbReference type="Pfam" id="PF01398">
    <property type="entry name" value="JAB"/>
    <property type="match status" value="1"/>
</dbReference>
<dbReference type="Pfam" id="PF23594">
    <property type="entry name" value="RPN11_C"/>
    <property type="match status" value="1"/>
</dbReference>
<dbReference type="SMART" id="SM00232">
    <property type="entry name" value="JAB_MPN"/>
    <property type="match status" value="1"/>
</dbReference>
<dbReference type="SUPFAM" id="SSF102712">
    <property type="entry name" value="JAB1/MPN domain"/>
    <property type="match status" value="1"/>
</dbReference>
<dbReference type="PROSITE" id="PS50249">
    <property type="entry name" value="MPN"/>
    <property type="match status" value="1"/>
</dbReference>
<keyword id="KW-0378">Hydrolase</keyword>
<keyword id="KW-0479">Metal-binding</keyword>
<keyword id="KW-0482">Metalloprotease</keyword>
<keyword id="KW-0645">Protease</keyword>
<keyword id="KW-0647">Proteasome</keyword>
<keyword id="KW-1185">Reference proteome</keyword>
<keyword id="KW-0833">Ubl conjugation pathway</keyword>
<keyword id="KW-0862">Zinc</keyword>
<organism>
    <name type="scientific">Caenorhabditis elegans</name>
    <dbReference type="NCBI Taxonomy" id="6239"/>
    <lineage>
        <taxon>Eukaryota</taxon>
        <taxon>Metazoa</taxon>
        <taxon>Ecdysozoa</taxon>
        <taxon>Nematoda</taxon>
        <taxon>Chromadorea</taxon>
        <taxon>Rhabditida</taxon>
        <taxon>Rhabditina</taxon>
        <taxon>Rhabditomorpha</taxon>
        <taxon>Rhabditoidea</taxon>
        <taxon>Rhabditidae</taxon>
        <taxon>Peloderinae</taxon>
        <taxon>Caenorhabditis</taxon>
    </lineage>
</organism>
<accession>O76577</accession>
<gene>
    <name type="primary">rpn-11</name>
    <name type="ORF">K07D4.3</name>
</gene>